<organism>
    <name type="scientific">Cupriavidus metallidurans (strain ATCC 43123 / DSM 2839 / NBRC 102507 / CH34)</name>
    <name type="common">Ralstonia metallidurans</name>
    <dbReference type="NCBI Taxonomy" id="266264"/>
    <lineage>
        <taxon>Bacteria</taxon>
        <taxon>Pseudomonadati</taxon>
        <taxon>Pseudomonadota</taxon>
        <taxon>Betaproteobacteria</taxon>
        <taxon>Burkholderiales</taxon>
        <taxon>Burkholderiaceae</taxon>
        <taxon>Cupriavidus</taxon>
    </lineage>
</organism>
<comment type="function">
    <text evidence="1">An essential GTPase which binds GTP, GDP and possibly (p)ppGpp with moderate affinity, with high nucleotide exchange rates and a fairly low GTP hydrolysis rate. Plays a role in control of the cell cycle, stress response, ribosome biogenesis and in those bacteria that undergo differentiation, in morphogenesis control.</text>
</comment>
<comment type="cofactor">
    <cofactor evidence="1">
        <name>Mg(2+)</name>
        <dbReference type="ChEBI" id="CHEBI:18420"/>
    </cofactor>
</comment>
<comment type="subunit">
    <text evidence="1">Monomer.</text>
</comment>
<comment type="subcellular location">
    <subcellularLocation>
        <location evidence="1">Cytoplasm</location>
    </subcellularLocation>
</comment>
<comment type="similarity">
    <text evidence="1">Belongs to the TRAFAC class OBG-HflX-like GTPase superfamily. OBG GTPase family.</text>
</comment>
<evidence type="ECO:0000255" key="1">
    <source>
        <dbReference type="HAMAP-Rule" id="MF_01454"/>
    </source>
</evidence>
<evidence type="ECO:0000255" key="2">
    <source>
        <dbReference type="PROSITE-ProRule" id="PRU01231"/>
    </source>
</evidence>
<protein>
    <recommendedName>
        <fullName evidence="1">GTPase Obg</fullName>
        <ecNumber evidence="1">3.6.5.-</ecNumber>
    </recommendedName>
    <alternativeName>
        <fullName evidence="1">GTP-binding protein Obg</fullName>
    </alternativeName>
</protein>
<dbReference type="EC" id="3.6.5.-" evidence="1"/>
<dbReference type="EMBL" id="CP000352">
    <property type="protein sequence ID" value="ABF09976.1"/>
    <property type="molecule type" value="Genomic_DNA"/>
</dbReference>
<dbReference type="SMR" id="Q1LIQ0"/>
<dbReference type="STRING" id="266264.Rmet_3104"/>
<dbReference type="KEGG" id="rme:Rmet_3104"/>
<dbReference type="eggNOG" id="COG0536">
    <property type="taxonomic scope" value="Bacteria"/>
</dbReference>
<dbReference type="HOGENOM" id="CLU_011747_2_0_4"/>
<dbReference type="Proteomes" id="UP000002429">
    <property type="component" value="Chromosome"/>
</dbReference>
<dbReference type="GO" id="GO:0005737">
    <property type="term" value="C:cytoplasm"/>
    <property type="evidence" value="ECO:0007669"/>
    <property type="project" value="UniProtKB-SubCell"/>
</dbReference>
<dbReference type="GO" id="GO:0005525">
    <property type="term" value="F:GTP binding"/>
    <property type="evidence" value="ECO:0007669"/>
    <property type="project" value="UniProtKB-UniRule"/>
</dbReference>
<dbReference type="GO" id="GO:0003924">
    <property type="term" value="F:GTPase activity"/>
    <property type="evidence" value="ECO:0007669"/>
    <property type="project" value="UniProtKB-UniRule"/>
</dbReference>
<dbReference type="GO" id="GO:0000287">
    <property type="term" value="F:magnesium ion binding"/>
    <property type="evidence" value="ECO:0007669"/>
    <property type="project" value="InterPro"/>
</dbReference>
<dbReference type="GO" id="GO:0042254">
    <property type="term" value="P:ribosome biogenesis"/>
    <property type="evidence" value="ECO:0007669"/>
    <property type="project" value="UniProtKB-UniRule"/>
</dbReference>
<dbReference type="CDD" id="cd01898">
    <property type="entry name" value="Obg"/>
    <property type="match status" value="1"/>
</dbReference>
<dbReference type="FunFam" id="2.70.210.12:FF:000001">
    <property type="entry name" value="GTPase Obg"/>
    <property type="match status" value="1"/>
</dbReference>
<dbReference type="Gene3D" id="2.70.210.12">
    <property type="entry name" value="GTP1/OBG domain"/>
    <property type="match status" value="1"/>
</dbReference>
<dbReference type="Gene3D" id="3.40.50.300">
    <property type="entry name" value="P-loop containing nucleotide triphosphate hydrolases"/>
    <property type="match status" value="1"/>
</dbReference>
<dbReference type="HAMAP" id="MF_01454">
    <property type="entry name" value="GTPase_Obg"/>
    <property type="match status" value="1"/>
</dbReference>
<dbReference type="InterPro" id="IPR031167">
    <property type="entry name" value="G_OBG"/>
</dbReference>
<dbReference type="InterPro" id="IPR006073">
    <property type="entry name" value="GTP-bd"/>
</dbReference>
<dbReference type="InterPro" id="IPR014100">
    <property type="entry name" value="GTP-bd_Obg/CgtA"/>
</dbReference>
<dbReference type="InterPro" id="IPR006074">
    <property type="entry name" value="GTP1-OBG_CS"/>
</dbReference>
<dbReference type="InterPro" id="IPR006169">
    <property type="entry name" value="GTP1_OBG_dom"/>
</dbReference>
<dbReference type="InterPro" id="IPR036726">
    <property type="entry name" value="GTP1_OBG_dom_sf"/>
</dbReference>
<dbReference type="InterPro" id="IPR045086">
    <property type="entry name" value="OBG_GTPase"/>
</dbReference>
<dbReference type="InterPro" id="IPR027417">
    <property type="entry name" value="P-loop_NTPase"/>
</dbReference>
<dbReference type="NCBIfam" id="TIGR02729">
    <property type="entry name" value="Obg_CgtA"/>
    <property type="match status" value="1"/>
</dbReference>
<dbReference type="NCBIfam" id="NF008954">
    <property type="entry name" value="PRK12296.1"/>
    <property type="match status" value="1"/>
</dbReference>
<dbReference type="NCBIfam" id="NF008955">
    <property type="entry name" value="PRK12297.1"/>
    <property type="match status" value="1"/>
</dbReference>
<dbReference type="NCBIfam" id="NF008956">
    <property type="entry name" value="PRK12299.1"/>
    <property type="match status" value="1"/>
</dbReference>
<dbReference type="PANTHER" id="PTHR11702">
    <property type="entry name" value="DEVELOPMENTALLY REGULATED GTP-BINDING PROTEIN-RELATED"/>
    <property type="match status" value="1"/>
</dbReference>
<dbReference type="PANTHER" id="PTHR11702:SF31">
    <property type="entry name" value="MITOCHONDRIAL RIBOSOME-ASSOCIATED GTPASE 2"/>
    <property type="match status" value="1"/>
</dbReference>
<dbReference type="Pfam" id="PF01018">
    <property type="entry name" value="GTP1_OBG"/>
    <property type="match status" value="1"/>
</dbReference>
<dbReference type="Pfam" id="PF01926">
    <property type="entry name" value="MMR_HSR1"/>
    <property type="match status" value="1"/>
</dbReference>
<dbReference type="PIRSF" id="PIRSF002401">
    <property type="entry name" value="GTP_bd_Obg/CgtA"/>
    <property type="match status" value="1"/>
</dbReference>
<dbReference type="PRINTS" id="PR00326">
    <property type="entry name" value="GTP1OBG"/>
</dbReference>
<dbReference type="SUPFAM" id="SSF82051">
    <property type="entry name" value="Obg GTP-binding protein N-terminal domain"/>
    <property type="match status" value="1"/>
</dbReference>
<dbReference type="SUPFAM" id="SSF52540">
    <property type="entry name" value="P-loop containing nucleoside triphosphate hydrolases"/>
    <property type="match status" value="1"/>
</dbReference>
<dbReference type="PROSITE" id="PS51710">
    <property type="entry name" value="G_OBG"/>
    <property type="match status" value="1"/>
</dbReference>
<dbReference type="PROSITE" id="PS00905">
    <property type="entry name" value="GTP1_OBG"/>
    <property type="match status" value="1"/>
</dbReference>
<dbReference type="PROSITE" id="PS51883">
    <property type="entry name" value="OBG"/>
    <property type="match status" value="1"/>
</dbReference>
<feature type="chain" id="PRO_0000386171" description="GTPase Obg">
    <location>
        <begin position="1"/>
        <end position="365"/>
    </location>
</feature>
<feature type="domain" description="Obg" evidence="2">
    <location>
        <begin position="1"/>
        <end position="159"/>
    </location>
</feature>
<feature type="domain" description="OBG-type G" evidence="1">
    <location>
        <begin position="160"/>
        <end position="334"/>
    </location>
</feature>
<feature type="binding site" evidence="1">
    <location>
        <begin position="166"/>
        <end position="173"/>
    </location>
    <ligand>
        <name>GTP</name>
        <dbReference type="ChEBI" id="CHEBI:37565"/>
    </ligand>
</feature>
<feature type="binding site" evidence="1">
    <location>
        <position position="173"/>
    </location>
    <ligand>
        <name>Mg(2+)</name>
        <dbReference type="ChEBI" id="CHEBI:18420"/>
    </ligand>
</feature>
<feature type="binding site" evidence="1">
    <location>
        <begin position="191"/>
        <end position="195"/>
    </location>
    <ligand>
        <name>GTP</name>
        <dbReference type="ChEBI" id="CHEBI:37565"/>
    </ligand>
</feature>
<feature type="binding site" evidence="1">
    <location>
        <position position="193"/>
    </location>
    <ligand>
        <name>Mg(2+)</name>
        <dbReference type="ChEBI" id="CHEBI:18420"/>
    </ligand>
</feature>
<feature type="binding site" evidence="1">
    <location>
        <begin position="213"/>
        <end position="216"/>
    </location>
    <ligand>
        <name>GTP</name>
        <dbReference type="ChEBI" id="CHEBI:37565"/>
    </ligand>
</feature>
<feature type="binding site" evidence="1">
    <location>
        <begin position="284"/>
        <end position="287"/>
    </location>
    <ligand>
        <name>GTP</name>
        <dbReference type="ChEBI" id="CHEBI:37565"/>
    </ligand>
</feature>
<feature type="binding site" evidence="1">
    <location>
        <begin position="315"/>
        <end position="317"/>
    </location>
    <ligand>
        <name>GTP</name>
        <dbReference type="ChEBI" id="CHEBI:37565"/>
    </ligand>
</feature>
<name>OBG_CUPMC</name>
<proteinExistence type="inferred from homology"/>
<gene>
    <name evidence="1" type="primary">obg</name>
    <name type="ordered locus">Rmet_3104</name>
</gene>
<sequence length="365" mass="39764">MKFIDEARIEAIAGNGGNGSASFRREKFVPFGGPDGGDGGRGGSVFAQADRNINTLIDFRYAKKHVARNGENGRGSDCYGAAGEDVTLRMPVGTLISDMDTGEVIADLTEHGQLVCLAEGGMGGWGNLHFKSSTNRAPRQQVDGKPGERRMLKLELKVLADVGLLGMPNAGKSTFISHVSNARPKVADYPFTTLHPNLGVVRVDHEQSFVVADIPGLIEGAAEGAGLGHQFLRHLQRTGLLLHIVDIAPFDENVDPVAEAKAIVNELKKYDETLYDKPRWLVLNKLDVVPEEERAARVKDFVKRYKWKGPVFHISALTGEGCRELVYAIKDHLAALKAEEAAALAEPDIRLDDRLHNVDRDDSKA</sequence>
<keyword id="KW-0963">Cytoplasm</keyword>
<keyword id="KW-0342">GTP-binding</keyword>
<keyword id="KW-0378">Hydrolase</keyword>
<keyword id="KW-0460">Magnesium</keyword>
<keyword id="KW-0479">Metal-binding</keyword>
<keyword id="KW-0547">Nucleotide-binding</keyword>
<keyword id="KW-1185">Reference proteome</keyword>
<reference key="1">
    <citation type="journal article" date="2010" name="PLoS ONE">
        <title>The complete genome sequence of Cupriavidus metallidurans strain CH34, a master survivalist in harsh and anthropogenic environments.</title>
        <authorList>
            <person name="Janssen P.J."/>
            <person name="Van Houdt R."/>
            <person name="Moors H."/>
            <person name="Monsieurs P."/>
            <person name="Morin N."/>
            <person name="Michaux A."/>
            <person name="Benotmane M.A."/>
            <person name="Leys N."/>
            <person name="Vallaeys T."/>
            <person name="Lapidus A."/>
            <person name="Monchy S."/>
            <person name="Medigue C."/>
            <person name="Taghavi S."/>
            <person name="McCorkle S."/>
            <person name="Dunn J."/>
            <person name="van der Lelie D."/>
            <person name="Mergeay M."/>
        </authorList>
    </citation>
    <scope>NUCLEOTIDE SEQUENCE [LARGE SCALE GENOMIC DNA]</scope>
    <source>
        <strain>ATCC 43123 / DSM 2839 / NBRC 102507 / CH34</strain>
    </source>
</reference>
<accession>Q1LIQ0</accession>